<dbReference type="EMBL" id="CP001144">
    <property type="protein sequence ID" value="ACH73732.1"/>
    <property type="molecule type" value="Genomic_DNA"/>
</dbReference>
<dbReference type="RefSeq" id="WP_000743123.1">
    <property type="nucleotide sequence ID" value="NC_011205.1"/>
</dbReference>
<dbReference type="SMR" id="B5FHQ2"/>
<dbReference type="KEGG" id="sed:SeD_A1838"/>
<dbReference type="HOGENOM" id="CLU_1174761_0_0_6"/>
<dbReference type="Proteomes" id="UP000008322">
    <property type="component" value="Chromosome"/>
</dbReference>
<dbReference type="GO" id="GO:0005886">
    <property type="term" value="C:plasma membrane"/>
    <property type="evidence" value="ECO:0007669"/>
    <property type="project" value="UniProtKB-SubCell"/>
</dbReference>
<dbReference type="HAMAP" id="MF_01065">
    <property type="entry name" value="UPF0257"/>
    <property type="match status" value="1"/>
</dbReference>
<dbReference type="InterPro" id="IPR010646">
    <property type="entry name" value="UPF0257"/>
</dbReference>
<dbReference type="NCBIfam" id="NF002798">
    <property type="entry name" value="PRK02939.1"/>
    <property type="match status" value="1"/>
</dbReference>
<dbReference type="Pfam" id="PF06788">
    <property type="entry name" value="UPF0257"/>
    <property type="match status" value="1"/>
</dbReference>
<dbReference type="PROSITE" id="PS51257">
    <property type="entry name" value="PROKAR_LIPOPROTEIN"/>
    <property type="match status" value="1"/>
</dbReference>
<feature type="signal peptide" evidence="1">
    <location>
        <begin position="1"/>
        <end position="16"/>
    </location>
</feature>
<feature type="chain" id="PRO_1000136558" description="UPF0257 lipoprotein YnfC">
    <location>
        <begin position="17"/>
        <end position="236"/>
    </location>
</feature>
<feature type="lipid moiety-binding region" description="N-palmitoyl cysteine" evidence="1">
    <location>
        <position position="17"/>
    </location>
</feature>
<feature type="lipid moiety-binding region" description="S-diacylglycerol cysteine" evidence="1">
    <location>
        <position position="17"/>
    </location>
</feature>
<organism>
    <name type="scientific">Salmonella dublin (strain CT_02021853)</name>
    <dbReference type="NCBI Taxonomy" id="439851"/>
    <lineage>
        <taxon>Bacteria</taxon>
        <taxon>Pseudomonadati</taxon>
        <taxon>Pseudomonadota</taxon>
        <taxon>Gammaproteobacteria</taxon>
        <taxon>Enterobacterales</taxon>
        <taxon>Enterobacteriaceae</taxon>
        <taxon>Salmonella</taxon>
    </lineage>
</organism>
<comment type="subcellular location">
    <subcellularLocation>
        <location evidence="1">Cell membrane</location>
        <topology evidence="1">Lipid-anchor</topology>
    </subcellularLocation>
</comment>
<comment type="similarity">
    <text evidence="1">Belongs to the UPF0257 family.</text>
</comment>
<protein>
    <recommendedName>
        <fullName evidence="1">UPF0257 lipoprotein YnfC</fullName>
    </recommendedName>
</protein>
<evidence type="ECO:0000255" key="1">
    <source>
        <dbReference type="HAMAP-Rule" id="MF_01065"/>
    </source>
</evidence>
<gene>
    <name evidence="1" type="primary">ynfC</name>
    <name type="ordered locus">SeD_A1838</name>
</gene>
<proteinExistence type="inferred from homology"/>
<accession>B5FHQ2</accession>
<sequence length="236" mass="26201">MKKPLLLTLLCMILAGCDNPKSLESFTPEMASFSNEFDFDPLRGPVKDFSQTLMSENGEVAKQVTGTLSQEGCFDTLELHDLENNTGLALVLDANYYRDAQTLEKKVQLQGKCQLAALPSAGVTWETDDNGFVVSATGKEMKVEYRYDSEGYPLGKTTINSQNTLSVTAKPSADPRKKLDYTAVSRVNDRQVGNVTQSCEYDAYANPVDCRLVIVDESVKPAVSHHYTIKNRIDYY</sequence>
<keyword id="KW-1003">Cell membrane</keyword>
<keyword id="KW-0449">Lipoprotein</keyword>
<keyword id="KW-0472">Membrane</keyword>
<keyword id="KW-0564">Palmitate</keyword>
<keyword id="KW-0732">Signal</keyword>
<reference key="1">
    <citation type="journal article" date="2011" name="J. Bacteriol.">
        <title>Comparative genomics of 28 Salmonella enterica isolates: evidence for CRISPR-mediated adaptive sublineage evolution.</title>
        <authorList>
            <person name="Fricke W.F."/>
            <person name="Mammel M.K."/>
            <person name="McDermott P.F."/>
            <person name="Tartera C."/>
            <person name="White D.G."/>
            <person name="Leclerc J.E."/>
            <person name="Ravel J."/>
            <person name="Cebula T.A."/>
        </authorList>
    </citation>
    <scope>NUCLEOTIDE SEQUENCE [LARGE SCALE GENOMIC DNA]</scope>
    <source>
        <strain>CT_02021853</strain>
    </source>
</reference>
<name>YNFC_SALDC</name>